<protein>
    <recommendedName>
        <fullName evidence="1">Phenylalanine--tRNA ligase beta subunit</fullName>
        <ecNumber evidence="1">6.1.1.20</ecNumber>
    </recommendedName>
    <alternativeName>
        <fullName evidence="1">Phenylalanyl-tRNA synthetase beta subunit</fullName>
        <shortName evidence="1">PheRS</shortName>
    </alternativeName>
</protein>
<gene>
    <name evidence="1" type="primary">pheT</name>
    <name type="ordered locus">PF0990</name>
</gene>
<sequence>MPKFDVAKSDLERLVGREFSVEEWEDLVLYAKCELDDVWEEDGKIYFKLDSKDTNRPDLWSAEGVARQIRWALGLAKGLPKYEVEESDVVVYVDKKLRNIRPYGVYAVVEGLKLDEEALSQLIQLQEKVALTYGRRRREVAIGIFDFDKVKPPIYYRAAEKTEKFVPLGYSEEMTLEEILEKHEKGREYGHLIRDKPYYPLLVDSEGNVLSMPPIINSELTGRVTTETKNVFVDVTGWDLRKVMLALNVIVTALAERGGKIKRVKVIYPDFEITTPDLTPKEFEVSFEYIRKLSGLELSNEEIKELLERMMYEVEILSENKAKVKYPAFRDDIMHTRDVLEDVLIAYGYNNIDPEEPKLAVQGRGDPFKDFEDAIRDLMVGFGLQEVMTFNLTSKEVQFDKMNIPEEEIVEIANPISSRWSALRKWLLPSLMEFLSNNTHEEYPQRIFEVGLATLIDESRETKTVSEPKLAVALAGSGYTFTNAKEILDSLMRHLGIEYDIEETVHGSFIPGRVGKILVDGKEIGIIGEIHPQVLENWNIQVPVVAFEIFLKPLYR</sequence>
<accession>Q8U260</accession>
<dbReference type="EC" id="6.1.1.20" evidence="1"/>
<dbReference type="EMBL" id="AE009950">
    <property type="protein sequence ID" value="AAL81114.1"/>
    <property type="molecule type" value="Genomic_DNA"/>
</dbReference>
<dbReference type="RefSeq" id="WP_011012127.1">
    <property type="nucleotide sequence ID" value="NZ_CP023154.1"/>
</dbReference>
<dbReference type="SMR" id="Q8U260"/>
<dbReference type="IntAct" id="Q8U260">
    <property type="interactions" value="1"/>
</dbReference>
<dbReference type="STRING" id="186497.PF0990"/>
<dbReference type="PaxDb" id="186497-PF0990"/>
<dbReference type="GeneID" id="41712803"/>
<dbReference type="KEGG" id="pfu:PF0990"/>
<dbReference type="PATRIC" id="fig|186497.12.peg.1049"/>
<dbReference type="eggNOG" id="arCOG00412">
    <property type="taxonomic scope" value="Archaea"/>
</dbReference>
<dbReference type="HOGENOM" id="CLU_020279_3_0_2"/>
<dbReference type="OrthoDB" id="10073at2157"/>
<dbReference type="PhylomeDB" id="Q8U260"/>
<dbReference type="Proteomes" id="UP000001013">
    <property type="component" value="Chromosome"/>
</dbReference>
<dbReference type="GO" id="GO:0009328">
    <property type="term" value="C:phenylalanine-tRNA ligase complex"/>
    <property type="evidence" value="ECO:0007669"/>
    <property type="project" value="TreeGrafter"/>
</dbReference>
<dbReference type="GO" id="GO:0005524">
    <property type="term" value="F:ATP binding"/>
    <property type="evidence" value="ECO:0007669"/>
    <property type="project" value="UniProtKB-UniRule"/>
</dbReference>
<dbReference type="GO" id="GO:0000287">
    <property type="term" value="F:magnesium ion binding"/>
    <property type="evidence" value="ECO:0007669"/>
    <property type="project" value="InterPro"/>
</dbReference>
<dbReference type="GO" id="GO:0004826">
    <property type="term" value="F:phenylalanine-tRNA ligase activity"/>
    <property type="evidence" value="ECO:0007669"/>
    <property type="project" value="UniProtKB-UniRule"/>
</dbReference>
<dbReference type="GO" id="GO:0003723">
    <property type="term" value="F:RNA binding"/>
    <property type="evidence" value="ECO:0007669"/>
    <property type="project" value="InterPro"/>
</dbReference>
<dbReference type="GO" id="GO:0006432">
    <property type="term" value="P:phenylalanyl-tRNA aminoacylation"/>
    <property type="evidence" value="ECO:0007669"/>
    <property type="project" value="UniProtKB-UniRule"/>
</dbReference>
<dbReference type="CDD" id="cd00769">
    <property type="entry name" value="PheRS_beta_core"/>
    <property type="match status" value="1"/>
</dbReference>
<dbReference type="FunFam" id="3.30.56.10:FF:000011">
    <property type="entry name" value="Phenylalanine--tRNA ligase beta subunit"/>
    <property type="match status" value="1"/>
</dbReference>
<dbReference type="FunFam" id="3.30.930.10:FF:000132">
    <property type="entry name" value="Phenylalanine--tRNA ligase beta subunit"/>
    <property type="match status" value="1"/>
</dbReference>
<dbReference type="FunFam" id="3.50.40.10:FF:000003">
    <property type="entry name" value="Phenylalanine--tRNA ligase beta subunit"/>
    <property type="match status" value="1"/>
</dbReference>
<dbReference type="FunFam" id="3.30.56.10:FF:000012">
    <property type="entry name" value="Phenylalanine-tRNA ligase, beta subunit"/>
    <property type="match status" value="1"/>
</dbReference>
<dbReference type="Gene3D" id="3.30.56.10">
    <property type="match status" value="2"/>
</dbReference>
<dbReference type="Gene3D" id="3.30.930.10">
    <property type="entry name" value="Bira Bifunctional Protein, Domain 2"/>
    <property type="match status" value="1"/>
</dbReference>
<dbReference type="Gene3D" id="3.50.40.10">
    <property type="entry name" value="Phenylalanyl-trna Synthetase, Chain B, domain 3"/>
    <property type="match status" value="1"/>
</dbReference>
<dbReference type="HAMAP" id="MF_00284">
    <property type="entry name" value="Phe_tRNA_synth_beta2"/>
    <property type="match status" value="1"/>
</dbReference>
<dbReference type="InterPro" id="IPR045864">
    <property type="entry name" value="aa-tRNA-synth_II/BPL/LPL"/>
</dbReference>
<dbReference type="InterPro" id="IPR005146">
    <property type="entry name" value="B3/B4_tRNA-bd"/>
</dbReference>
<dbReference type="InterPro" id="IPR009061">
    <property type="entry name" value="DNA-bd_dom_put_sf"/>
</dbReference>
<dbReference type="InterPro" id="IPR045060">
    <property type="entry name" value="Phe-tRNA-ligase_IIc_bsu"/>
</dbReference>
<dbReference type="InterPro" id="IPR004531">
    <property type="entry name" value="Phe-tRNA-synth_IIc_bsu_arc_euk"/>
</dbReference>
<dbReference type="InterPro" id="IPR020825">
    <property type="entry name" value="Phe-tRNA_synthase-like_B3/B4"/>
</dbReference>
<dbReference type="InterPro" id="IPR022918">
    <property type="entry name" value="Phe_tRNA_ligase_beta2_arc"/>
</dbReference>
<dbReference type="InterPro" id="IPR041616">
    <property type="entry name" value="PheRS_beta_core"/>
</dbReference>
<dbReference type="InterPro" id="IPR005147">
    <property type="entry name" value="tRNA_synthase_B5-dom"/>
</dbReference>
<dbReference type="NCBIfam" id="TIGR00471">
    <property type="entry name" value="pheT_arch"/>
    <property type="match status" value="1"/>
</dbReference>
<dbReference type="PANTHER" id="PTHR10947:SF0">
    <property type="entry name" value="PHENYLALANINE--TRNA LIGASE BETA SUBUNIT"/>
    <property type="match status" value="1"/>
</dbReference>
<dbReference type="PANTHER" id="PTHR10947">
    <property type="entry name" value="PHENYLALANYL-TRNA SYNTHETASE BETA CHAIN AND LEUCINE-RICH REPEAT-CONTAINING PROTEIN 47"/>
    <property type="match status" value="1"/>
</dbReference>
<dbReference type="Pfam" id="PF03483">
    <property type="entry name" value="B3_4"/>
    <property type="match status" value="1"/>
</dbReference>
<dbReference type="Pfam" id="PF03484">
    <property type="entry name" value="B5"/>
    <property type="match status" value="1"/>
</dbReference>
<dbReference type="Pfam" id="PF17759">
    <property type="entry name" value="tRNA_synthFbeta"/>
    <property type="match status" value="1"/>
</dbReference>
<dbReference type="SMART" id="SM00873">
    <property type="entry name" value="B3_4"/>
    <property type="match status" value="1"/>
</dbReference>
<dbReference type="SMART" id="SM00874">
    <property type="entry name" value="B5"/>
    <property type="match status" value="1"/>
</dbReference>
<dbReference type="SUPFAM" id="SSF55681">
    <property type="entry name" value="Class II aaRS and biotin synthetases"/>
    <property type="match status" value="1"/>
</dbReference>
<dbReference type="SUPFAM" id="SSF56037">
    <property type="entry name" value="PheT/TilS domain"/>
    <property type="match status" value="1"/>
</dbReference>
<dbReference type="SUPFAM" id="SSF46955">
    <property type="entry name" value="Putative DNA-binding domain"/>
    <property type="match status" value="2"/>
</dbReference>
<dbReference type="PROSITE" id="PS51483">
    <property type="entry name" value="B5"/>
    <property type="match status" value="1"/>
</dbReference>
<organism>
    <name type="scientific">Pyrococcus furiosus (strain ATCC 43587 / DSM 3638 / JCM 8422 / Vc1)</name>
    <dbReference type="NCBI Taxonomy" id="186497"/>
    <lineage>
        <taxon>Archaea</taxon>
        <taxon>Methanobacteriati</taxon>
        <taxon>Methanobacteriota</taxon>
        <taxon>Thermococci</taxon>
        <taxon>Thermococcales</taxon>
        <taxon>Thermococcaceae</taxon>
        <taxon>Pyrococcus</taxon>
    </lineage>
</organism>
<evidence type="ECO:0000255" key="1">
    <source>
        <dbReference type="HAMAP-Rule" id="MF_00284"/>
    </source>
</evidence>
<proteinExistence type="inferred from homology"/>
<reference key="1">
    <citation type="journal article" date="1999" name="Genetics">
        <title>Divergence of the hyperthermophilic archaea Pyrococcus furiosus and P. horikoshii inferred from complete genomic sequences.</title>
        <authorList>
            <person name="Maeder D.L."/>
            <person name="Weiss R.B."/>
            <person name="Dunn D.M."/>
            <person name="Cherry J.L."/>
            <person name="Gonzalez J.M."/>
            <person name="DiRuggiero J."/>
            <person name="Robb F.T."/>
        </authorList>
    </citation>
    <scope>NUCLEOTIDE SEQUENCE [LARGE SCALE GENOMIC DNA]</scope>
    <source>
        <strain>ATCC 43587 / DSM 3638 / JCM 8422 / Vc1</strain>
    </source>
</reference>
<name>SYFB_PYRFU</name>
<feature type="chain" id="PRO_0000127008" description="Phenylalanine--tRNA ligase beta subunit">
    <location>
        <begin position="1"/>
        <end position="556"/>
    </location>
</feature>
<feature type="domain" description="B5" evidence="1">
    <location>
        <begin position="278"/>
        <end position="354"/>
    </location>
</feature>
<feature type="binding site" evidence="1">
    <location>
        <position position="332"/>
    </location>
    <ligand>
        <name>Mg(2+)</name>
        <dbReference type="ChEBI" id="CHEBI:18420"/>
        <note>shared with alpha subunit</note>
    </ligand>
</feature>
<feature type="binding site" evidence="1">
    <location>
        <position position="338"/>
    </location>
    <ligand>
        <name>Mg(2+)</name>
        <dbReference type="ChEBI" id="CHEBI:18420"/>
        <note>shared with alpha subunit</note>
    </ligand>
</feature>
<feature type="binding site" evidence="1">
    <location>
        <position position="341"/>
    </location>
    <ligand>
        <name>Mg(2+)</name>
        <dbReference type="ChEBI" id="CHEBI:18420"/>
        <note>shared with alpha subunit</note>
    </ligand>
</feature>
<feature type="binding site" evidence="1">
    <location>
        <position position="342"/>
    </location>
    <ligand>
        <name>Mg(2+)</name>
        <dbReference type="ChEBI" id="CHEBI:18420"/>
        <note>shared with alpha subunit</note>
    </ligand>
</feature>
<keyword id="KW-0030">Aminoacyl-tRNA synthetase</keyword>
<keyword id="KW-0067">ATP-binding</keyword>
<keyword id="KW-0963">Cytoplasm</keyword>
<keyword id="KW-0436">Ligase</keyword>
<keyword id="KW-0460">Magnesium</keyword>
<keyword id="KW-0479">Metal-binding</keyword>
<keyword id="KW-0547">Nucleotide-binding</keyword>
<keyword id="KW-0648">Protein biosynthesis</keyword>
<keyword id="KW-1185">Reference proteome</keyword>
<comment type="catalytic activity">
    <reaction evidence="1">
        <text>tRNA(Phe) + L-phenylalanine + ATP = L-phenylalanyl-tRNA(Phe) + AMP + diphosphate + H(+)</text>
        <dbReference type="Rhea" id="RHEA:19413"/>
        <dbReference type="Rhea" id="RHEA-COMP:9668"/>
        <dbReference type="Rhea" id="RHEA-COMP:9699"/>
        <dbReference type="ChEBI" id="CHEBI:15378"/>
        <dbReference type="ChEBI" id="CHEBI:30616"/>
        <dbReference type="ChEBI" id="CHEBI:33019"/>
        <dbReference type="ChEBI" id="CHEBI:58095"/>
        <dbReference type="ChEBI" id="CHEBI:78442"/>
        <dbReference type="ChEBI" id="CHEBI:78531"/>
        <dbReference type="ChEBI" id="CHEBI:456215"/>
        <dbReference type="EC" id="6.1.1.20"/>
    </reaction>
</comment>
<comment type="cofactor">
    <cofactor evidence="1">
        <name>Mg(2+)</name>
        <dbReference type="ChEBI" id="CHEBI:18420"/>
    </cofactor>
</comment>
<comment type="subunit">
    <text evidence="1">Tetramer of two alpha and two beta subunits.</text>
</comment>
<comment type="subcellular location">
    <subcellularLocation>
        <location evidence="1">Cytoplasm</location>
    </subcellularLocation>
</comment>
<comment type="similarity">
    <text evidence="1">Belongs to the phenylalanyl-tRNA synthetase beta subunit family. Type 2 subfamily.</text>
</comment>